<proteinExistence type="inferred from homology"/>
<keyword id="KW-1070">Brassinosteroid signaling pathway</keyword>
<keyword id="KW-0963">Cytoplasm</keyword>
<keyword id="KW-0341">Growth regulation</keyword>
<keyword id="KW-1185">Reference proteome</keyword>
<keyword id="KW-0804">Transcription</keyword>
<keyword id="KW-0805">Transcription regulation</keyword>
<name>ILI4_ORYSI</name>
<gene>
    <name type="primary">ILI4</name>
    <name type="synonym">BHLH172</name>
    <name type="ORF">OsI_22236</name>
</gene>
<accession>A2YAW8</accession>
<organism>
    <name type="scientific">Oryza sativa subsp. indica</name>
    <name type="common">Rice</name>
    <dbReference type="NCBI Taxonomy" id="39946"/>
    <lineage>
        <taxon>Eukaryota</taxon>
        <taxon>Viridiplantae</taxon>
        <taxon>Streptophyta</taxon>
        <taxon>Embryophyta</taxon>
        <taxon>Tracheophyta</taxon>
        <taxon>Spermatophyta</taxon>
        <taxon>Magnoliopsida</taxon>
        <taxon>Liliopsida</taxon>
        <taxon>Poales</taxon>
        <taxon>Poaceae</taxon>
        <taxon>BOP clade</taxon>
        <taxon>Oryzoideae</taxon>
        <taxon>Oryzeae</taxon>
        <taxon>Oryzinae</taxon>
        <taxon>Oryza</taxon>
        <taxon>Oryza sativa</taxon>
    </lineage>
</organism>
<evidence type="ECO:0000250" key="1"/>
<evidence type="ECO:0000255" key="2">
    <source>
        <dbReference type="PROSITE-ProRule" id="PRU00981"/>
    </source>
</evidence>
<feature type="chain" id="PRO_0000429095" description="Transcription factor ILI4">
    <location>
        <begin position="1"/>
        <end position="87"/>
    </location>
</feature>
<feature type="domain" description="bHLH" evidence="2">
    <location>
        <begin position="1"/>
        <end position="54"/>
    </location>
</feature>
<dbReference type="EMBL" id="CM000131">
    <property type="protein sequence ID" value="EAZ00229.1"/>
    <property type="molecule type" value="Genomic_DNA"/>
</dbReference>
<dbReference type="SMR" id="A2YAW8"/>
<dbReference type="STRING" id="39946.A2YAW8"/>
<dbReference type="EnsemblPlants" id="BGIOSGA022576-TA">
    <property type="protein sequence ID" value="BGIOSGA022576-PA"/>
    <property type="gene ID" value="BGIOSGA022576"/>
</dbReference>
<dbReference type="Gramene" id="BGIOSGA022576-TA">
    <property type="protein sequence ID" value="BGIOSGA022576-PA"/>
    <property type="gene ID" value="BGIOSGA022576"/>
</dbReference>
<dbReference type="HOGENOM" id="CLU_183267_0_0_1"/>
<dbReference type="OMA" id="QTCNYIK"/>
<dbReference type="Proteomes" id="UP000007015">
    <property type="component" value="Chromosome 6"/>
</dbReference>
<dbReference type="GO" id="GO:0005737">
    <property type="term" value="C:cytoplasm"/>
    <property type="evidence" value="ECO:0007669"/>
    <property type="project" value="UniProtKB-SubCell"/>
</dbReference>
<dbReference type="GO" id="GO:0005634">
    <property type="term" value="C:nucleus"/>
    <property type="evidence" value="ECO:0007669"/>
    <property type="project" value="EnsemblPlants"/>
</dbReference>
<dbReference type="GO" id="GO:0046983">
    <property type="term" value="F:protein dimerization activity"/>
    <property type="evidence" value="ECO:0007669"/>
    <property type="project" value="InterPro"/>
</dbReference>
<dbReference type="GO" id="GO:0009742">
    <property type="term" value="P:brassinosteroid mediated signaling pathway"/>
    <property type="evidence" value="ECO:0007669"/>
    <property type="project" value="UniProtKB-KW"/>
</dbReference>
<dbReference type="GO" id="GO:0016036">
    <property type="term" value="P:cellular response to phosphate starvation"/>
    <property type="evidence" value="ECO:0007669"/>
    <property type="project" value="EnsemblPlants"/>
</dbReference>
<dbReference type="GO" id="GO:0051511">
    <property type="term" value="P:negative regulation of unidimensional cell growth"/>
    <property type="evidence" value="ECO:0007669"/>
    <property type="project" value="EnsemblPlants"/>
</dbReference>
<dbReference type="GO" id="GO:0006355">
    <property type="term" value="P:regulation of DNA-templated transcription"/>
    <property type="evidence" value="ECO:0007669"/>
    <property type="project" value="InterPro"/>
</dbReference>
<dbReference type="GO" id="GO:2000024">
    <property type="term" value="P:regulation of leaf development"/>
    <property type="evidence" value="ECO:0007669"/>
    <property type="project" value="EnsemblPlants"/>
</dbReference>
<dbReference type="FunFam" id="4.10.280.10:FF:000106">
    <property type="entry name" value="Transcription factor ILI5"/>
    <property type="match status" value="1"/>
</dbReference>
<dbReference type="Gene3D" id="4.10.280.10">
    <property type="entry name" value="Helix-loop-helix DNA-binding domain"/>
    <property type="match status" value="1"/>
</dbReference>
<dbReference type="InterPro" id="IPR011598">
    <property type="entry name" value="bHLH_dom"/>
</dbReference>
<dbReference type="InterPro" id="IPR036638">
    <property type="entry name" value="HLH_DNA-bd_sf"/>
</dbReference>
<dbReference type="InterPro" id="IPR044293">
    <property type="entry name" value="PRE"/>
</dbReference>
<dbReference type="PANTHER" id="PTHR46446:SF31">
    <property type="entry name" value="TRANSCRIPTION FACTOR ILI4"/>
    <property type="match status" value="1"/>
</dbReference>
<dbReference type="PANTHER" id="PTHR46446">
    <property type="entry name" value="TRANSCRIPTION FACTOR PRE"/>
    <property type="match status" value="1"/>
</dbReference>
<dbReference type="Pfam" id="PF23174">
    <property type="entry name" value="bHLH_ILI"/>
    <property type="match status" value="1"/>
</dbReference>
<dbReference type="SUPFAM" id="SSF47459">
    <property type="entry name" value="HLH, helix-loop-helix DNA-binding domain"/>
    <property type="match status" value="1"/>
</dbReference>
<dbReference type="PROSITE" id="PS50888">
    <property type="entry name" value="BHLH"/>
    <property type="match status" value="1"/>
</dbReference>
<reference key="1">
    <citation type="journal article" date="2005" name="PLoS Biol.">
        <title>The genomes of Oryza sativa: a history of duplications.</title>
        <authorList>
            <person name="Yu J."/>
            <person name="Wang J."/>
            <person name="Lin W."/>
            <person name="Li S."/>
            <person name="Li H."/>
            <person name="Zhou J."/>
            <person name="Ni P."/>
            <person name="Dong W."/>
            <person name="Hu S."/>
            <person name="Zeng C."/>
            <person name="Zhang J."/>
            <person name="Zhang Y."/>
            <person name="Li R."/>
            <person name="Xu Z."/>
            <person name="Li S."/>
            <person name="Li X."/>
            <person name="Zheng H."/>
            <person name="Cong L."/>
            <person name="Lin L."/>
            <person name="Yin J."/>
            <person name="Geng J."/>
            <person name="Li G."/>
            <person name="Shi J."/>
            <person name="Liu J."/>
            <person name="Lv H."/>
            <person name="Li J."/>
            <person name="Wang J."/>
            <person name="Deng Y."/>
            <person name="Ran L."/>
            <person name="Shi X."/>
            <person name="Wang X."/>
            <person name="Wu Q."/>
            <person name="Li C."/>
            <person name="Ren X."/>
            <person name="Wang J."/>
            <person name="Wang X."/>
            <person name="Li D."/>
            <person name="Liu D."/>
            <person name="Zhang X."/>
            <person name="Ji Z."/>
            <person name="Zhao W."/>
            <person name="Sun Y."/>
            <person name="Zhang Z."/>
            <person name="Bao J."/>
            <person name="Han Y."/>
            <person name="Dong L."/>
            <person name="Ji J."/>
            <person name="Chen P."/>
            <person name="Wu S."/>
            <person name="Liu J."/>
            <person name="Xiao Y."/>
            <person name="Bu D."/>
            <person name="Tan J."/>
            <person name="Yang L."/>
            <person name="Ye C."/>
            <person name="Zhang J."/>
            <person name="Xu J."/>
            <person name="Zhou Y."/>
            <person name="Yu Y."/>
            <person name="Zhang B."/>
            <person name="Zhuang S."/>
            <person name="Wei H."/>
            <person name="Liu B."/>
            <person name="Lei M."/>
            <person name="Yu H."/>
            <person name="Li Y."/>
            <person name="Xu H."/>
            <person name="Wei S."/>
            <person name="He X."/>
            <person name="Fang L."/>
            <person name="Zhang Z."/>
            <person name="Zhang Y."/>
            <person name="Huang X."/>
            <person name="Su Z."/>
            <person name="Tong W."/>
            <person name="Li J."/>
            <person name="Tong Z."/>
            <person name="Li S."/>
            <person name="Ye J."/>
            <person name="Wang L."/>
            <person name="Fang L."/>
            <person name="Lei T."/>
            <person name="Chen C.-S."/>
            <person name="Chen H.-C."/>
            <person name="Xu Z."/>
            <person name="Li H."/>
            <person name="Huang H."/>
            <person name="Zhang F."/>
            <person name="Xu H."/>
            <person name="Li N."/>
            <person name="Zhao C."/>
            <person name="Li S."/>
            <person name="Dong L."/>
            <person name="Huang Y."/>
            <person name="Li L."/>
            <person name="Xi Y."/>
            <person name="Qi Q."/>
            <person name="Li W."/>
            <person name="Zhang B."/>
            <person name="Hu W."/>
            <person name="Zhang Y."/>
            <person name="Tian X."/>
            <person name="Jiao Y."/>
            <person name="Liang X."/>
            <person name="Jin J."/>
            <person name="Gao L."/>
            <person name="Zheng W."/>
            <person name="Hao B."/>
            <person name="Liu S.-M."/>
            <person name="Wang W."/>
            <person name="Yuan L."/>
            <person name="Cao M."/>
            <person name="McDermott J."/>
            <person name="Samudrala R."/>
            <person name="Wang J."/>
            <person name="Wong G.K.-S."/>
            <person name="Yang H."/>
        </authorList>
    </citation>
    <scope>NUCLEOTIDE SEQUENCE [LARGE SCALE GENOMIC DNA]</scope>
    <source>
        <strain>cv. 93-11</strain>
    </source>
</reference>
<comment type="function">
    <text evidence="1">Atypical and probable non DNA-binding bHLH transcription factor that acts as a positive regulator of brassinsteroid (BR) response. Controls lamina inclination by participating in two BR signaling pathways involving BRI1 and RGA1 (By similarity).</text>
</comment>
<comment type="subcellular location">
    <subcellularLocation>
        <location evidence="1">Cytoplasm</location>
    </subcellularLocation>
</comment>
<comment type="similarity">
    <text>Belongs to the bHLH protein family.</text>
</comment>
<sequence length="87" mass="9747">MSSRRSSRSSVSEEEINELISKLQSLLPSSRRRGANQASTTKLLKETCSYIKSLHREVDDLSDRLSDLMAGMDHNSPGAEIIRSLLR</sequence>
<protein>
    <recommendedName>
        <fullName>Transcription factor ILI4</fullName>
    </recommendedName>
    <alternativeName>
        <fullName>Basic helix-loop-helix protein 172</fullName>
    </alternativeName>
    <alternativeName>
        <fullName>Protein INCREASED LEAF INCLINATION 4</fullName>
    </alternativeName>
    <alternativeName>
        <fullName>bHLH transcription factor bHLH172</fullName>
    </alternativeName>
</protein>